<gene>
    <name evidence="1" type="primary">tdk</name>
    <name type="ordered locus">CLD_0650</name>
</gene>
<accession>B1IE18</accession>
<comment type="catalytic activity">
    <reaction evidence="1">
        <text>thymidine + ATP = dTMP + ADP + H(+)</text>
        <dbReference type="Rhea" id="RHEA:19129"/>
        <dbReference type="ChEBI" id="CHEBI:15378"/>
        <dbReference type="ChEBI" id="CHEBI:17748"/>
        <dbReference type="ChEBI" id="CHEBI:30616"/>
        <dbReference type="ChEBI" id="CHEBI:63528"/>
        <dbReference type="ChEBI" id="CHEBI:456216"/>
        <dbReference type="EC" id="2.7.1.21"/>
    </reaction>
</comment>
<comment type="subunit">
    <text evidence="1">Homotetramer.</text>
</comment>
<comment type="subcellular location">
    <subcellularLocation>
        <location evidence="1">Cytoplasm</location>
    </subcellularLocation>
</comment>
<comment type="similarity">
    <text evidence="1">Belongs to the thymidine kinase family.</text>
</comment>
<name>KITH_CLOBK</name>
<sequence>MYGPKDHGWIEVVAGPMYSGKTEELIRRIRRAEIAKQKVQVFKPEIDNRYSKQDVVSHAGDKIQSVPVKSSKEILEKLLDDTDVIGIDEAQFFDDFLVEIVSKIANNNRRVICAGLDMDFKGEPFGPMPKLMAIAEFVDKIQAVCMVCNNPATRTQRLINGKPAKKSDPVVLIGAQESYEARCRKCHRVPR</sequence>
<reference key="1">
    <citation type="journal article" date="2007" name="PLoS ONE">
        <title>Analysis of the neurotoxin complex genes in Clostridium botulinum A1-A4 and B1 strains: BoNT/A3, /Ba4 and /B1 clusters are located within plasmids.</title>
        <authorList>
            <person name="Smith T.J."/>
            <person name="Hill K.K."/>
            <person name="Foley B.T."/>
            <person name="Detter J.C."/>
            <person name="Munk A.C."/>
            <person name="Bruce D.C."/>
            <person name="Doggett N.A."/>
            <person name="Smith L.A."/>
            <person name="Marks J.D."/>
            <person name="Xie G."/>
            <person name="Brettin T.S."/>
        </authorList>
    </citation>
    <scope>NUCLEOTIDE SEQUENCE [LARGE SCALE GENOMIC DNA]</scope>
    <source>
        <strain>Okra / Type B1</strain>
    </source>
</reference>
<proteinExistence type="inferred from homology"/>
<feature type="chain" id="PRO_1000095429" description="Thymidine kinase">
    <location>
        <begin position="1"/>
        <end position="191"/>
    </location>
</feature>
<feature type="active site" description="Proton acceptor" evidence="1">
    <location>
        <position position="89"/>
    </location>
</feature>
<feature type="binding site" evidence="1">
    <location>
        <begin position="15"/>
        <end position="22"/>
    </location>
    <ligand>
        <name>ATP</name>
        <dbReference type="ChEBI" id="CHEBI:30616"/>
    </ligand>
</feature>
<feature type="binding site" evidence="1">
    <location>
        <begin position="88"/>
        <end position="91"/>
    </location>
    <ligand>
        <name>ATP</name>
        <dbReference type="ChEBI" id="CHEBI:30616"/>
    </ligand>
</feature>
<feature type="binding site" evidence="1">
    <location>
        <position position="145"/>
    </location>
    <ligand>
        <name>Zn(2+)</name>
        <dbReference type="ChEBI" id="CHEBI:29105"/>
    </ligand>
</feature>
<feature type="binding site" evidence="1">
    <location>
        <position position="148"/>
    </location>
    <ligand>
        <name>Zn(2+)</name>
        <dbReference type="ChEBI" id="CHEBI:29105"/>
    </ligand>
</feature>
<feature type="binding site" evidence="1">
    <location>
        <position position="183"/>
    </location>
    <ligand>
        <name>Zn(2+)</name>
        <dbReference type="ChEBI" id="CHEBI:29105"/>
    </ligand>
</feature>
<feature type="binding site" evidence="1">
    <location>
        <position position="186"/>
    </location>
    <ligand>
        <name>Zn(2+)</name>
        <dbReference type="ChEBI" id="CHEBI:29105"/>
    </ligand>
</feature>
<organism>
    <name type="scientific">Clostridium botulinum (strain Okra / Type B1)</name>
    <dbReference type="NCBI Taxonomy" id="498213"/>
    <lineage>
        <taxon>Bacteria</taxon>
        <taxon>Bacillati</taxon>
        <taxon>Bacillota</taxon>
        <taxon>Clostridia</taxon>
        <taxon>Eubacteriales</taxon>
        <taxon>Clostridiaceae</taxon>
        <taxon>Clostridium</taxon>
    </lineage>
</organism>
<keyword id="KW-0067">ATP-binding</keyword>
<keyword id="KW-0963">Cytoplasm</keyword>
<keyword id="KW-0237">DNA synthesis</keyword>
<keyword id="KW-0418">Kinase</keyword>
<keyword id="KW-0479">Metal-binding</keyword>
<keyword id="KW-0547">Nucleotide-binding</keyword>
<keyword id="KW-0808">Transferase</keyword>
<keyword id="KW-0862">Zinc</keyword>
<dbReference type="EC" id="2.7.1.21" evidence="1"/>
<dbReference type="EMBL" id="CP000939">
    <property type="protein sequence ID" value="ACA45010.1"/>
    <property type="molecule type" value="Genomic_DNA"/>
</dbReference>
<dbReference type="RefSeq" id="WP_003405033.1">
    <property type="nucleotide sequence ID" value="NC_010516.1"/>
</dbReference>
<dbReference type="SMR" id="B1IE18"/>
<dbReference type="KEGG" id="cbb:CLD_0650"/>
<dbReference type="HOGENOM" id="CLU_064400_3_0_9"/>
<dbReference type="Proteomes" id="UP000008541">
    <property type="component" value="Chromosome"/>
</dbReference>
<dbReference type="GO" id="GO:0005829">
    <property type="term" value="C:cytosol"/>
    <property type="evidence" value="ECO:0007669"/>
    <property type="project" value="TreeGrafter"/>
</dbReference>
<dbReference type="GO" id="GO:0005524">
    <property type="term" value="F:ATP binding"/>
    <property type="evidence" value="ECO:0007669"/>
    <property type="project" value="UniProtKB-UniRule"/>
</dbReference>
<dbReference type="GO" id="GO:0004797">
    <property type="term" value="F:thymidine kinase activity"/>
    <property type="evidence" value="ECO:0007669"/>
    <property type="project" value="UniProtKB-UniRule"/>
</dbReference>
<dbReference type="GO" id="GO:0008270">
    <property type="term" value="F:zinc ion binding"/>
    <property type="evidence" value="ECO:0007669"/>
    <property type="project" value="UniProtKB-UniRule"/>
</dbReference>
<dbReference type="GO" id="GO:0071897">
    <property type="term" value="P:DNA biosynthetic process"/>
    <property type="evidence" value="ECO:0007669"/>
    <property type="project" value="UniProtKB-KW"/>
</dbReference>
<dbReference type="GO" id="GO:0046104">
    <property type="term" value="P:thymidine metabolic process"/>
    <property type="evidence" value="ECO:0007669"/>
    <property type="project" value="TreeGrafter"/>
</dbReference>
<dbReference type="FunFam" id="3.30.60.20:FF:000026">
    <property type="entry name" value="Thymidine kinase"/>
    <property type="match status" value="1"/>
</dbReference>
<dbReference type="FunFam" id="3.40.50.300:FF:000384">
    <property type="entry name" value="Thymidine kinase"/>
    <property type="match status" value="1"/>
</dbReference>
<dbReference type="Gene3D" id="3.30.60.20">
    <property type="match status" value="1"/>
</dbReference>
<dbReference type="Gene3D" id="3.40.50.300">
    <property type="entry name" value="P-loop containing nucleotide triphosphate hydrolases"/>
    <property type="match status" value="1"/>
</dbReference>
<dbReference type="HAMAP" id="MF_00124">
    <property type="entry name" value="Thymidine_kinase"/>
    <property type="match status" value="1"/>
</dbReference>
<dbReference type="InterPro" id="IPR027417">
    <property type="entry name" value="P-loop_NTPase"/>
</dbReference>
<dbReference type="InterPro" id="IPR001267">
    <property type="entry name" value="Thymidine_kinase"/>
</dbReference>
<dbReference type="InterPro" id="IPR020633">
    <property type="entry name" value="Thymidine_kinase_CS"/>
</dbReference>
<dbReference type="NCBIfam" id="NF003296">
    <property type="entry name" value="PRK04296.1-1"/>
    <property type="match status" value="1"/>
</dbReference>
<dbReference type="PANTHER" id="PTHR11441">
    <property type="entry name" value="THYMIDINE KINASE"/>
    <property type="match status" value="1"/>
</dbReference>
<dbReference type="PANTHER" id="PTHR11441:SF0">
    <property type="entry name" value="THYMIDINE KINASE, CYTOSOLIC"/>
    <property type="match status" value="1"/>
</dbReference>
<dbReference type="Pfam" id="PF00265">
    <property type="entry name" value="TK"/>
    <property type="match status" value="1"/>
</dbReference>
<dbReference type="PIRSF" id="PIRSF035805">
    <property type="entry name" value="TK_cell"/>
    <property type="match status" value="1"/>
</dbReference>
<dbReference type="SUPFAM" id="SSF57716">
    <property type="entry name" value="Glucocorticoid receptor-like (DNA-binding domain)"/>
    <property type="match status" value="1"/>
</dbReference>
<dbReference type="SUPFAM" id="SSF52540">
    <property type="entry name" value="P-loop containing nucleoside triphosphate hydrolases"/>
    <property type="match status" value="1"/>
</dbReference>
<dbReference type="PROSITE" id="PS00603">
    <property type="entry name" value="TK_CELLULAR_TYPE"/>
    <property type="match status" value="1"/>
</dbReference>
<protein>
    <recommendedName>
        <fullName evidence="1">Thymidine kinase</fullName>
        <ecNumber evidence="1">2.7.1.21</ecNumber>
    </recommendedName>
</protein>
<evidence type="ECO:0000255" key="1">
    <source>
        <dbReference type="HAMAP-Rule" id="MF_00124"/>
    </source>
</evidence>